<name>ATPG_FRATN</name>
<sequence>MSNAREIRSKVQSVKNTQKITGAMELVAASKMRGAIVKMNNVRPYVESANTIIKNVTAASIDYPNPYLFDRDVKRVGYIVTSTDRGLCGGLNINLFKHVLKEIKNNIEDRVGVDVCVIGSKAENFFAKLKDVNIVATAHYNDKDKEGSIRAIGGAVKVMLDKFTAGEIDRLYMSSNQFVSTIKQRPRLQTLLPIQDIFSAEEIKANKEKATKGHWDYIYERDIEEVLNALCIRYIEAQVRGAILENAACEQAARMMAMKNATDNASDIIDQLKLDYNKVRQAMITQELAEICSGAAAV</sequence>
<proteinExistence type="inferred from homology"/>
<feature type="chain" id="PRO_1000053215" description="ATP synthase gamma chain">
    <location>
        <begin position="1"/>
        <end position="298"/>
    </location>
</feature>
<comment type="function">
    <text evidence="1">Produces ATP from ADP in the presence of a proton gradient across the membrane. The gamma chain is believed to be important in regulating ATPase activity and the flow of protons through the CF(0) complex.</text>
</comment>
<comment type="subunit">
    <text evidence="1">F-type ATPases have 2 components, CF(1) - the catalytic core - and CF(0) - the membrane proton channel. CF(1) has five subunits: alpha(3), beta(3), gamma(1), delta(1), epsilon(1). CF(0) has three main subunits: a, b and c.</text>
</comment>
<comment type="subcellular location">
    <subcellularLocation>
        <location evidence="1">Cell inner membrane</location>
        <topology evidence="1">Peripheral membrane protein</topology>
    </subcellularLocation>
</comment>
<comment type="similarity">
    <text evidence="1">Belongs to the ATPase gamma chain family.</text>
</comment>
<reference key="1">
    <citation type="journal article" date="2007" name="Genome Biol.">
        <title>Comparison of Francisella tularensis genomes reveals evolutionary events associated with the emergence of human pathogenic strains.</title>
        <authorList>
            <person name="Rohmer L."/>
            <person name="Fong C."/>
            <person name="Abmayr S."/>
            <person name="Wasnick M."/>
            <person name="Larson Freeman T.J."/>
            <person name="Radey M."/>
            <person name="Guina T."/>
            <person name="Svensson K."/>
            <person name="Hayden H.S."/>
            <person name="Jacobs M."/>
            <person name="Gallagher L.A."/>
            <person name="Manoil C."/>
            <person name="Ernst R.K."/>
            <person name="Drees B."/>
            <person name="Buckley D."/>
            <person name="Haugen E."/>
            <person name="Bovee D."/>
            <person name="Zhou Y."/>
            <person name="Chang J."/>
            <person name="Levy R."/>
            <person name="Lim R."/>
            <person name="Gillett W."/>
            <person name="Guenthener D."/>
            <person name="Kang A."/>
            <person name="Shaffer S.A."/>
            <person name="Taylor G."/>
            <person name="Chen J."/>
            <person name="Gallis B."/>
            <person name="D'Argenio D.A."/>
            <person name="Forsman M."/>
            <person name="Olson M.V."/>
            <person name="Goodlett D.R."/>
            <person name="Kaul R."/>
            <person name="Miller S.I."/>
            <person name="Brittnacher M.J."/>
        </authorList>
    </citation>
    <scope>NUCLEOTIDE SEQUENCE [LARGE SCALE GENOMIC DNA]</scope>
    <source>
        <strain>U112</strain>
    </source>
</reference>
<gene>
    <name evidence="1" type="primary">atpG</name>
    <name type="ordered locus">FTN_1647</name>
</gene>
<protein>
    <recommendedName>
        <fullName evidence="1">ATP synthase gamma chain</fullName>
    </recommendedName>
    <alternativeName>
        <fullName evidence="1">ATP synthase F1 sector gamma subunit</fullName>
    </alternativeName>
    <alternativeName>
        <fullName evidence="1">F-ATPase gamma subunit</fullName>
    </alternativeName>
</protein>
<evidence type="ECO:0000255" key="1">
    <source>
        <dbReference type="HAMAP-Rule" id="MF_00815"/>
    </source>
</evidence>
<accession>A0Q8E0</accession>
<organism>
    <name type="scientific">Francisella tularensis subsp. novicida (strain U112)</name>
    <dbReference type="NCBI Taxonomy" id="401614"/>
    <lineage>
        <taxon>Bacteria</taxon>
        <taxon>Pseudomonadati</taxon>
        <taxon>Pseudomonadota</taxon>
        <taxon>Gammaproteobacteria</taxon>
        <taxon>Thiotrichales</taxon>
        <taxon>Francisellaceae</taxon>
        <taxon>Francisella</taxon>
    </lineage>
</organism>
<keyword id="KW-0066">ATP synthesis</keyword>
<keyword id="KW-0997">Cell inner membrane</keyword>
<keyword id="KW-1003">Cell membrane</keyword>
<keyword id="KW-0139">CF(1)</keyword>
<keyword id="KW-0375">Hydrogen ion transport</keyword>
<keyword id="KW-0406">Ion transport</keyword>
<keyword id="KW-0472">Membrane</keyword>
<keyword id="KW-0813">Transport</keyword>
<dbReference type="EMBL" id="CP000439">
    <property type="protein sequence ID" value="ABK90505.1"/>
    <property type="molecule type" value="Genomic_DNA"/>
</dbReference>
<dbReference type="RefSeq" id="WP_003019684.1">
    <property type="nucleotide sequence ID" value="NZ_CP009633.1"/>
</dbReference>
<dbReference type="SMR" id="A0Q8E0"/>
<dbReference type="KEGG" id="ftn:FTN_1647"/>
<dbReference type="KEGG" id="ftx:AW25_341"/>
<dbReference type="BioCyc" id="FTUL401614:G1G75-1708-MONOMER"/>
<dbReference type="Proteomes" id="UP000000762">
    <property type="component" value="Chromosome"/>
</dbReference>
<dbReference type="GO" id="GO:0005886">
    <property type="term" value="C:plasma membrane"/>
    <property type="evidence" value="ECO:0007669"/>
    <property type="project" value="UniProtKB-SubCell"/>
</dbReference>
<dbReference type="GO" id="GO:0045259">
    <property type="term" value="C:proton-transporting ATP synthase complex"/>
    <property type="evidence" value="ECO:0007669"/>
    <property type="project" value="UniProtKB-KW"/>
</dbReference>
<dbReference type="GO" id="GO:0005524">
    <property type="term" value="F:ATP binding"/>
    <property type="evidence" value="ECO:0007669"/>
    <property type="project" value="UniProtKB-UniRule"/>
</dbReference>
<dbReference type="GO" id="GO:0046933">
    <property type="term" value="F:proton-transporting ATP synthase activity, rotational mechanism"/>
    <property type="evidence" value="ECO:0007669"/>
    <property type="project" value="UniProtKB-UniRule"/>
</dbReference>
<dbReference type="GO" id="GO:0042777">
    <property type="term" value="P:proton motive force-driven plasma membrane ATP synthesis"/>
    <property type="evidence" value="ECO:0007669"/>
    <property type="project" value="UniProtKB-UniRule"/>
</dbReference>
<dbReference type="CDD" id="cd12151">
    <property type="entry name" value="F1-ATPase_gamma"/>
    <property type="match status" value="1"/>
</dbReference>
<dbReference type="Gene3D" id="3.40.1380.10">
    <property type="match status" value="1"/>
</dbReference>
<dbReference type="Gene3D" id="1.10.287.80">
    <property type="entry name" value="ATP synthase, gamma subunit, helix hairpin domain"/>
    <property type="match status" value="1"/>
</dbReference>
<dbReference type="HAMAP" id="MF_00815">
    <property type="entry name" value="ATP_synth_gamma_bact"/>
    <property type="match status" value="1"/>
</dbReference>
<dbReference type="InterPro" id="IPR035968">
    <property type="entry name" value="ATP_synth_F1_ATPase_gsu"/>
</dbReference>
<dbReference type="InterPro" id="IPR000131">
    <property type="entry name" value="ATP_synth_F1_gsu"/>
</dbReference>
<dbReference type="InterPro" id="IPR023632">
    <property type="entry name" value="ATP_synth_F1_gsu_CS"/>
</dbReference>
<dbReference type="NCBIfam" id="TIGR01146">
    <property type="entry name" value="ATPsyn_F1gamma"/>
    <property type="match status" value="1"/>
</dbReference>
<dbReference type="NCBIfam" id="NF009956">
    <property type="entry name" value="PRK13422.1"/>
    <property type="match status" value="1"/>
</dbReference>
<dbReference type="PANTHER" id="PTHR11693">
    <property type="entry name" value="ATP SYNTHASE GAMMA CHAIN"/>
    <property type="match status" value="1"/>
</dbReference>
<dbReference type="PANTHER" id="PTHR11693:SF22">
    <property type="entry name" value="ATP SYNTHASE SUBUNIT GAMMA, MITOCHONDRIAL"/>
    <property type="match status" value="1"/>
</dbReference>
<dbReference type="Pfam" id="PF00231">
    <property type="entry name" value="ATP-synt"/>
    <property type="match status" value="1"/>
</dbReference>
<dbReference type="PRINTS" id="PR00126">
    <property type="entry name" value="ATPASEGAMMA"/>
</dbReference>
<dbReference type="SUPFAM" id="SSF52943">
    <property type="entry name" value="ATP synthase (F1-ATPase), gamma subunit"/>
    <property type="match status" value="1"/>
</dbReference>
<dbReference type="PROSITE" id="PS00153">
    <property type="entry name" value="ATPASE_GAMMA"/>
    <property type="match status" value="1"/>
</dbReference>